<protein>
    <recommendedName>
        <fullName>DNA-binding protein HU</fullName>
    </recommendedName>
</protein>
<keyword id="KW-0226">DNA condensation</keyword>
<keyword id="KW-0238">DNA-binding</keyword>
<organism>
    <name type="scientific">Xylella fastidiosa (strain 9a5c)</name>
    <dbReference type="NCBI Taxonomy" id="160492"/>
    <lineage>
        <taxon>Bacteria</taxon>
        <taxon>Pseudomonadati</taxon>
        <taxon>Pseudomonadota</taxon>
        <taxon>Gammaproteobacteria</taxon>
        <taxon>Lysobacterales</taxon>
        <taxon>Lysobacteraceae</taxon>
        <taxon>Xylella</taxon>
    </lineage>
</organism>
<proteinExistence type="inferred from homology"/>
<name>DBH_XYLFA</name>
<dbReference type="EMBL" id="AE003849">
    <property type="protein sequence ID" value="AAF84000.1"/>
    <property type="molecule type" value="Genomic_DNA"/>
</dbReference>
<dbReference type="PIR" id="D82712">
    <property type="entry name" value="D82712"/>
</dbReference>
<dbReference type="RefSeq" id="WP_010893701.1">
    <property type="nucleotide sequence ID" value="NC_002488.3"/>
</dbReference>
<dbReference type="SMR" id="Q9PE38"/>
<dbReference type="STRING" id="160492.XF_1190"/>
<dbReference type="KEGG" id="xfa:XF_1190"/>
<dbReference type="eggNOG" id="COG0776">
    <property type="taxonomic scope" value="Bacteria"/>
</dbReference>
<dbReference type="HOGENOM" id="CLU_105066_3_1_6"/>
<dbReference type="Proteomes" id="UP000000812">
    <property type="component" value="Chromosome"/>
</dbReference>
<dbReference type="GO" id="GO:0005829">
    <property type="term" value="C:cytosol"/>
    <property type="evidence" value="ECO:0007669"/>
    <property type="project" value="TreeGrafter"/>
</dbReference>
<dbReference type="GO" id="GO:0003677">
    <property type="term" value="F:DNA binding"/>
    <property type="evidence" value="ECO:0007669"/>
    <property type="project" value="UniProtKB-KW"/>
</dbReference>
<dbReference type="GO" id="GO:0030527">
    <property type="term" value="F:structural constituent of chromatin"/>
    <property type="evidence" value="ECO:0007669"/>
    <property type="project" value="InterPro"/>
</dbReference>
<dbReference type="GO" id="GO:0030261">
    <property type="term" value="P:chromosome condensation"/>
    <property type="evidence" value="ECO:0007669"/>
    <property type="project" value="UniProtKB-KW"/>
</dbReference>
<dbReference type="CDD" id="cd13831">
    <property type="entry name" value="HU"/>
    <property type="match status" value="1"/>
</dbReference>
<dbReference type="FunFam" id="4.10.520.10:FF:000001">
    <property type="entry name" value="DNA-binding protein HU"/>
    <property type="match status" value="1"/>
</dbReference>
<dbReference type="Gene3D" id="4.10.520.10">
    <property type="entry name" value="IHF-like DNA-binding proteins"/>
    <property type="match status" value="1"/>
</dbReference>
<dbReference type="InterPro" id="IPR000119">
    <property type="entry name" value="Hist_DNA-bd"/>
</dbReference>
<dbReference type="InterPro" id="IPR010992">
    <property type="entry name" value="IHF-like_DNA-bd_dom_sf"/>
</dbReference>
<dbReference type="PANTHER" id="PTHR33175">
    <property type="entry name" value="DNA-BINDING PROTEIN HU"/>
    <property type="match status" value="1"/>
</dbReference>
<dbReference type="PANTHER" id="PTHR33175:SF3">
    <property type="entry name" value="DNA-BINDING PROTEIN HU-BETA"/>
    <property type="match status" value="1"/>
</dbReference>
<dbReference type="Pfam" id="PF00216">
    <property type="entry name" value="Bac_DNA_binding"/>
    <property type="match status" value="1"/>
</dbReference>
<dbReference type="PRINTS" id="PR01727">
    <property type="entry name" value="DNABINDINGHU"/>
</dbReference>
<dbReference type="SMART" id="SM00411">
    <property type="entry name" value="BHL"/>
    <property type="match status" value="1"/>
</dbReference>
<dbReference type="SUPFAM" id="SSF47729">
    <property type="entry name" value="IHF-like DNA-binding proteins"/>
    <property type="match status" value="1"/>
</dbReference>
<feature type="chain" id="PRO_0000104996" description="DNA-binding protein HU">
    <location>
        <begin position="1"/>
        <end position="94"/>
    </location>
</feature>
<gene>
    <name type="primary">hup</name>
    <name type="ordered locus">XF_1190</name>
</gene>
<sequence>MNKTELIDGVAAAANLSKVEAGRAIDAVVNEITEALKKGDSVTLVGFGTFQVRPRAERPGRNPKSGELIMIAASNNPSFKPGKALKDAVKCSAG</sequence>
<evidence type="ECO:0000250" key="1"/>
<evidence type="ECO:0000305" key="2"/>
<accession>Q9PE38</accession>
<comment type="function">
    <text evidence="1">Histone-like DNA-binding protein which is capable of wrapping DNA to stabilize it, and thus to prevent its denaturation under extreme environmental conditions.</text>
</comment>
<comment type="similarity">
    <text evidence="2">Belongs to the bacterial histone-like protein family.</text>
</comment>
<reference key="1">
    <citation type="journal article" date="2000" name="Nature">
        <title>The genome sequence of the plant pathogen Xylella fastidiosa.</title>
        <authorList>
            <person name="Simpson A.J.G."/>
            <person name="Reinach F.C."/>
            <person name="Arruda P."/>
            <person name="Abreu F.A."/>
            <person name="Acencio M."/>
            <person name="Alvarenga R."/>
            <person name="Alves L.M.C."/>
            <person name="Araya J.E."/>
            <person name="Baia G.S."/>
            <person name="Baptista C.S."/>
            <person name="Barros M.H."/>
            <person name="Bonaccorsi E.D."/>
            <person name="Bordin S."/>
            <person name="Bove J.M."/>
            <person name="Briones M.R.S."/>
            <person name="Bueno M.R.P."/>
            <person name="Camargo A.A."/>
            <person name="Camargo L.E.A."/>
            <person name="Carraro D.M."/>
            <person name="Carrer H."/>
            <person name="Colauto N.B."/>
            <person name="Colombo C."/>
            <person name="Costa F.F."/>
            <person name="Costa M.C.R."/>
            <person name="Costa-Neto C.M."/>
            <person name="Coutinho L.L."/>
            <person name="Cristofani M."/>
            <person name="Dias-Neto E."/>
            <person name="Docena C."/>
            <person name="El-Dorry H."/>
            <person name="Facincani A.P."/>
            <person name="Ferreira A.J.S."/>
            <person name="Ferreira V.C.A."/>
            <person name="Ferro J.A."/>
            <person name="Fraga J.S."/>
            <person name="Franca S.C."/>
            <person name="Franco M.C."/>
            <person name="Frohme M."/>
            <person name="Furlan L.R."/>
            <person name="Garnier M."/>
            <person name="Goldman G.H."/>
            <person name="Goldman M.H.S."/>
            <person name="Gomes S.L."/>
            <person name="Gruber A."/>
            <person name="Ho P.L."/>
            <person name="Hoheisel J.D."/>
            <person name="Junqueira M.L."/>
            <person name="Kemper E.L."/>
            <person name="Kitajima J.P."/>
            <person name="Krieger J.E."/>
            <person name="Kuramae E.E."/>
            <person name="Laigret F."/>
            <person name="Lambais M.R."/>
            <person name="Leite L.C.C."/>
            <person name="Lemos E.G.M."/>
            <person name="Lemos M.V.F."/>
            <person name="Lopes S.A."/>
            <person name="Lopes C.R."/>
            <person name="Machado J.A."/>
            <person name="Machado M.A."/>
            <person name="Madeira A.M.B.N."/>
            <person name="Madeira H.M.F."/>
            <person name="Marino C.L."/>
            <person name="Marques M.V."/>
            <person name="Martins E.A.L."/>
            <person name="Martins E.M.F."/>
            <person name="Matsukuma A.Y."/>
            <person name="Menck C.F.M."/>
            <person name="Miracca E.C."/>
            <person name="Miyaki C.Y."/>
            <person name="Monteiro-Vitorello C.B."/>
            <person name="Moon D.H."/>
            <person name="Nagai M.A."/>
            <person name="Nascimento A.L.T.O."/>
            <person name="Netto L.E.S."/>
            <person name="Nhani A. Jr."/>
            <person name="Nobrega F.G."/>
            <person name="Nunes L.R."/>
            <person name="Oliveira M.A."/>
            <person name="de Oliveira M.C."/>
            <person name="de Oliveira R.C."/>
            <person name="Palmieri D.A."/>
            <person name="Paris A."/>
            <person name="Peixoto B.R."/>
            <person name="Pereira G.A.G."/>
            <person name="Pereira H.A. Jr."/>
            <person name="Pesquero J.B."/>
            <person name="Quaggio R.B."/>
            <person name="Roberto P.G."/>
            <person name="Rodrigues V."/>
            <person name="de Rosa A.J.M."/>
            <person name="de Rosa V.E. Jr."/>
            <person name="de Sa R.G."/>
            <person name="Santelli R.V."/>
            <person name="Sawasaki H.E."/>
            <person name="da Silva A.C.R."/>
            <person name="da Silva A.M."/>
            <person name="da Silva F.R."/>
            <person name="Silva W.A. Jr."/>
            <person name="da Silveira J.F."/>
            <person name="Silvestri M.L.Z."/>
            <person name="Siqueira W.J."/>
            <person name="de Souza A.A."/>
            <person name="de Souza A.P."/>
            <person name="Terenzi M.F."/>
            <person name="Truffi D."/>
            <person name="Tsai S.M."/>
            <person name="Tsuhako M.H."/>
            <person name="Vallada H."/>
            <person name="Van Sluys M.A."/>
            <person name="Verjovski-Almeida S."/>
            <person name="Vettore A.L."/>
            <person name="Zago M.A."/>
            <person name="Zatz M."/>
            <person name="Meidanis J."/>
            <person name="Setubal J.C."/>
        </authorList>
    </citation>
    <scope>NUCLEOTIDE SEQUENCE [LARGE SCALE GENOMIC DNA]</scope>
    <source>
        <strain>9a5c</strain>
    </source>
</reference>